<name>TYSY_MYCM1</name>
<proteinExistence type="inferred from homology"/>
<evidence type="ECO:0000255" key="1">
    <source>
        <dbReference type="HAMAP-Rule" id="MF_00008"/>
    </source>
</evidence>
<keyword id="KW-0963">Cytoplasm</keyword>
<keyword id="KW-0489">Methyltransferase</keyword>
<keyword id="KW-0545">Nucleotide biosynthesis</keyword>
<keyword id="KW-1185">Reference proteome</keyword>
<keyword id="KW-0808">Transferase</keyword>
<organism>
    <name type="scientific">Mycoplasma mobile (strain ATCC 43663 / 163K / NCTC 11711)</name>
    <name type="common">Mesomycoplasma mobile</name>
    <dbReference type="NCBI Taxonomy" id="267748"/>
    <lineage>
        <taxon>Bacteria</taxon>
        <taxon>Bacillati</taxon>
        <taxon>Mycoplasmatota</taxon>
        <taxon>Mycoplasmoidales</taxon>
        <taxon>Metamycoplasmataceae</taxon>
        <taxon>Mesomycoplasma</taxon>
    </lineage>
</organism>
<protein>
    <recommendedName>
        <fullName evidence="1">Thymidylate synthase</fullName>
        <shortName evidence="1">TS</shortName>
        <shortName evidence="1">TSase</shortName>
        <ecNumber evidence="1">2.1.1.45</ecNumber>
    </recommendedName>
</protein>
<comment type="function">
    <text evidence="1">Catalyzes the reductive methylation of 2'-deoxyuridine-5'-monophosphate (dUMP) to 2'-deoxythymidine-5'-monophosphate (dTMP) while utilizing 5,10-methylenetetrahydrofolate (mTHF) as the methyl donor and reductant in the reaction, yielding dihydrofolate (DHF) as a by-product. This enzymatic reaction provides an intracellular de novo source of dTMP, an essential precursor for DNA biosynthesis.</text>
</comment>
<comment type="catalytic activity">
    <reaction evidence="1">
        <text>dUMP + (6R)-5,10-methylene-5,6,7,8-tetrahydrofolate = 7,8-dihydrofolate + dTMP</text>
        <dbReference type="Rhea" id="RHEA:12104"/>
        <dbReference type="ChEBI" id="CHEBI:15636"/>
        <dbReference type="ChEBI" id="CHEBI:57451"/>
        <dbReference type="ChEBI" id="CHEBI:63528"/>
        <dbReference type="ChEBI" id="CHEBI:246422"/>
        <dbReference type="EC" id="2.1.1.45"/>
    </reaction>
</comment>
<comment type="pathway">
    <text evidence="1">Pyrimidine metabolism; dTTP biosynthesis.</text>
</comment>
<comment type="subunit">
    <text evidence="1">Homodimer.</text>
</comment>
<comment type="subcellular location">
    <subcellularLocation>
        <location evidence="1">Cytoplasm</location>
    </subcellularLocation>
</comment>
<comment type="similarity">
    <text evidence="1">Belongs to the thymidylate synthase family. Bacterial-type ThyA subfamily.</text>
</comment>
<feature type="chain" id="PRO_0000140984" description="Thymidylate synthase">
    <location>
        <begin position="1"/>
        <end position="288"/>
    </location>
</feature>
<feature type="active site" description="Nucleophile" evidence="1">
    <location>
        <position position="170"/>
    </location>
</feature>
<feature type="binding site" description="in other chain" evidence="1">
    <location>
        <position position="21"/>
    </location>
    <ligand>
        <name>dUMP</name>
        <dbReference type="ChEBI" id="CHEBI:246422"/>
        <note>ligand shared between dimeric partners</note>
    </ligand>
</feature>
<feature type="binding site" evidence="1">
    <location>
        <position position="51"/>
    </location>
    <ligand>
        <name>(6R)-5,10-methylene-5,6,7,8-tetrahydrofolate</name>
        <dbReference type="ChEBI" id="CHEBI:15636"/>
    </ligand>
</feature>
<feature type="binding site" evidence="1">
    <location>
        <begin position="150"/>
        <end position="151"/>
    </location>
    <ligand>
        <name>dUMP</name>
        <dbReference type="ChEBI" id="CHEBI:246422"/>
        <note>ligand shared between dimeric partners</note>
    </ligand>
</feature>
<feature type="binding site" description="in other chain" evidence="1">
    <location>
        <begin position="190"/>
        <end position="193"/>
    </location>
    <ligand>
        <name>dUMP</name>
        <dbReference type="ChEBI" id="CHEBI:246422"/>
        <note>ligand shared between dimeric partners</note>
    </ligand>
</feature>
<feature type="binding site" evidence="1">
    <location>
        <position position="193"/>
    </location>
    <ligand>
        <name>(6R)-5,10-methylene-5,6,7,8-tetrahydrofolate</name>
        <dbReference type="ChEBI" id="CHEBI:15636"/>
    </ligand>
</feature>
<feature type="binding site" description="in other chain" evidence="1">
    <location>
        <position position="201"/>
    </location>
    <ligand>
        <name>dUMP</name>
        <dbReference type="ChEBI" id="CHEBI:246422"/>
        <note>ligand shared between dimeric partners</note>
    </ligand>
</feature>
<feature type="binding site" description="in other chain" evidence="1">
    <location>
        <begin position="231"/>
        <end position="233"/>
    </location>
    <ligand>
        <name>dUMP</name>
        <dbReference type="ChEBI" id="CHEBI:246422"/>
        <note>ligand shared between dimeric partners</note>
    </ligand>
</feature>
<feature type="binding site" evidence="1">
    <location>
        <position position="287"/>
    </location>
    <ligand>
        <name>(6R)-5,10-methylene-5,6,7,8-tetrahydrofolate</name>
        <dbReference type="ChEBI" id="CHEBI:15636"/>
    </ligand>
</feature>
<dbReference type="EC" id="2.1.1.45" evidence="1"/>
<dbReference type="EMBL" id="AE017308">
    <property type="protein sequence ID" value="AAT27520.1"/>
    <property type="molecule type" value="Genomic_DNA"/>
</dbReference>
<dbReference type="RefSeq" id="WP_011264554.1">
    <property type="nucleotide sequence ID" value="NC_006908.1"/>
</dbReference>
<dbReference type="SMR" id="Q6KIQ6"/>
<dbReference type="STRING" id="267748.MMOB0340"/>
<dbReference type="KEGG" id="mmo:MMOB0340"/>
<dbReference type="eggNOG" id="COG0207">
    <property type="taxonomic scope" value="Bacteria"/>
</dbReference>
<dbReference type="HOGENOM" id="CLU_021669_0_0_14"/>
<dbReference type="OrthoDB" id="9774633at2"/>
<dbReference type="UniPathway" id="UPA00575"/>
<dbReference type="Proteomes" id="UP000009072">
    <property type="component" value="Chromosome"/>
</dbReference>
<dbReference type="GO" id="GO:0005829">
    <property type="term" value="C:cytosol"/>
    <property type="evidence" value="ECO:0007669"/>
    <property type="project" value="TreeGrafter"/>
</dbReference>
<dbReference type="GO" id="GO:0004799">
    <property type="term" value="F:thymidylate synthase activity"/>
    <property type="evidence" value="ECO:0007669"/>
    <property type="project" value="UniProtKB-UniRule"/>
</dbReference>
<dbReference type="GO" id="GO:0006231">
    <property type="term" value="P:dTMP biosynthetic process"/>
    <property type="evidence" value="ECO:0007669"/>
    <property type="project" value="UniProtKB-UniRule"/>
</dbReference>
<dbReference type="GO" id="GO:0006235">
    <property type="term" value="P:dTTP biosynthetic process"/>
    <property type="evidence" value="ECO:0007669"/>
    <property type="project" value="UniProtKB-UniRule"/>
</dbReference>
<dbReference type="GO" id="GO:0032259">
    <property type="term" value="P:methylation"/>
    <property type="evidence" value="ECO:0007669"/>
    <property type="project" value="UniProtKB-KW"/>
</dbReference>
<dbReference type="CDD" id="cd00351">
    <property type="entry name" value="TS_Pyrimidine_HMase"/>
    <property type="match status" value="1"/>
</dbReference>
<dbReference type="FunFam" id="3.30.572.10:FF:000013">
    <property type="entry name" value="Thymidylate synthase"/>
    <property type="match status" value="1"/>
</dbReference>
<dbReference type="Gene3D" id="3.30.572.10">
    <property type="entry name" value="Thymidylate synthase/dCMP hydroxymethylase domain"/>
    <property type="match status" value="1"/>
</dbReference>
<dbReference type="HAMAP" id="MF_00008">
    <property type="entry name" value="Thymidy_synth_bact"/>
    <property type="match status" value="1"/>
</dbReference>
<dbReference type="InterPro" id="IPR045097">
    <property type="entry name" value="Thymidate_synth/dCMP_Mease"/>
</dbReference>
<dbReference type="InterPro" id="IPR023451">
    <property type="entry name" value="Thymidate_synth/dCMP_Mease_dom"/>
</dbReference>
<dbReference type="InterPro" id="IPR036926">
    <property type="entry name" value="Thymidate_synth/dCMP_Mease_sf"/>
</dbReference>
<dbReference type="InterPro" id="IPR000398">
    <property type="entry name" value="Thymidylate_synthase"/>
</dbReference>
<dbReference type="NCBIfam" id="NF002497">
    <property type="entry name" value="PRK01827.1-3"/>
    <property type="match status" value="1"/>
</dbReference>
<dbReference type="NCBIfam" id="TIGR03284">
    <property type="entry name" value="thym_sym"/>
    <property type="match status" value="1"/>
</dbReference>
<dbReference type="PANTHER" id="PTHR11548:SF9">
    <property type="entry name" value="THYMIDYLATE SYNTHASE"/>
    <property type="match status" value="1"/>
</dbReference>
<dbReference type="PANTHER" id="PTHR11548">
    <property type="entry name" value="THYMIDYLATE SYNTHASE 1"/>
    <property type="match status" value="1"/>
</dbReference>
<dbReference type="Pfam" id="PF00303">
    <property type="entry name" value="Thymidylat_synt"/>
    <property type="match status" value="1"/>
</dbReference>
<dbReference type="PRINTS" id="PR00108">
    <property type="entry name" value="THYMDSNTHASE"/>
</dbReference>
<dbReference type="SUPFAM" id="SSF55831">
    <property type="entry name" value="Thymidylate synthase/dCMP hydroxymethylase"/>
    <property type="match status" value="1"/>
</dbReference>
<gene>
    <name evidence="1" type="primary">thyA</name>
    <name type="ordered locus">MMOB0340</name>
</gene>
<sequence length="288" mass="33365">MEQYLSLLKEILEKGQKKEDRTNTGTISYFGTQRRYDLSKGFPLVTTKKVHLKSIIFELLWFIKGDTNIKYLVDNGVNIWNEWPYETFKKSKDFNGESLADFVLKIKSDTLFAKKYGELGPVYGKQWRNFNGTDQLFDAIETIKKNPDSRRIIVSAWAANEISKMALPPCHAFFQFYVNNNKLSLQLYQRSGDTFLGVPFNIASYSILLAMVAQITNYEVGEFIHTIGDTHIYLNHLEQVEEQLSRKPLKLPKLVLNKKIKNIDDFKYEDIEIIDYESHPAIKAKVAV</sequence>
<reference key="1">
    <citation type="journal article" date="2004" name="Genome Res.">
        <title>The complete genome and proteome of Mycoplasma mobile.</title>
        <authorList>
            <person name="Jaffe J.D."/>
            <person name="Stange-Thomann N."/>
            <person name="Smith C."/>
            <person name="DeCaprio D."/>
            <person name="Fisher S."/>
            <person name="Butler J."/>
            <person name="Calvo S."/>
            <person name="Elkins T."/>
            <person name="FitzGerald M.G."/>
            <person name="Hafez N."/>
            <person name="Kodira C.D."/>
            <person name="Major J."/>
            <person name="Wang S."/>
            <person name="Wilkinson J."/>
            <person name="Nicol R."/>
            <person name="Nusbaum C."/>
            <person name="Birren B."/>
            <person name="Berg H.C."/>
            <person name="Church G.M."/>
        </authorList>
    </citation>
    <scope>NUCLEOTIDE SEQUENCE [LARGE SCALE GENOMIC DNA]</scope>
    <source>
        <strain>ATCC 43663 / NCTC 11711 / 163 K</strain>
    </source>
</reference>
<accession>Q6KIQ6</accession>